<dbReference type="EMBL" id="AJ248288">
    <property type="protein sequence ID" value="CAB50602.1"/>
    <property type="status" value="ALT_INIT"/>
    <property type="molecule type" value="Genomic_DNA"/>
</dbReference>
<dbReference type="EMBL" id="HE613800">
    <property type="protein sequence ID" value="CCE71168.1"/>
    <property type="molecule type" value="Genomic_DNA"/>
</dbReference>
<dbReference type="PIR" id="D75020">
    <property type="entry name" value="D75020"/>
</dbReference>
<dbReference type="RefSeq" id="WP_048147166.1">
    <property type="nucleotide sequence ID" value="NC_000868.1"/>
</dbReference>
<dbReference type="SMR" id="Q9UY10"/>
<dbReference type="STRING" id="272844.PAB1112"/>
<dbReference type="KEGG" id="pab:PAB1112"/>
<dbReference type="PATRIC" id="fig|272844.11.peg.1814"/>
<dbReference type="eggNOG" id="arCOG04308">
    <property type="taxonomic scope" value="Archaea"/>
</dbReference>
<dbReference type="HOGENOM" id="CLU_165882_0_0_2"/>
<dbReference type="OrthoDB" id="65304at2157"/>
<dbReference type="Proteomes" id="UP000000810">
    <property type="component" value="Chromosome"/>
</dbReference>
<dbReference type="Proteomes" id="UP000009139">
    <property type="component" value="Chromosome"/>
</dbReference>
<dbReference type="Gene3D" id="1.20.1440.50">
    <property type="entry name" value="Ta0600-like"/>
    <property type="match status" value="1"/>
</dbReference>
<dbReference type="HAMAP" id="MF_00342">
    <property type="entry name" value="UPF0147"/>
    <property type="match status" value="1"/>
</dbReference>
<dbReference type="InterPro" id="IPR023130">
    <property type="entry name" value="Ta0600-like_sf"/>
</dbReference>
<dbReference type="InterPro" id="IPR005354">
    <property type="entry name" value="UPF0147"/>
</dbReference>
<dbReference type="NCBIfam" id="NF003319">
    <property type="entry name" value="PRK04330.1"/>
    <property type="match status" value="1"/>
</dbReference>
<dbReference type="Pfam" id="PF03685">
    <property type="entry name" value="UPF0147"/>
    <property type="match status" value="1"/>
</dbReference>
<dbReference type="SUPFAM" id="SSF158436">
    <property type="entry name" value="Ta0600-like"/>
    <property type="match status" value="1"/>
</dbReference>
<accession>Q9UY10</accession>
<accession>G8ZK61</accession>
<name>Y1698_PYRAB</name>
<sequence>MSDVEERINQIIQVLREQVVQDTAVPRNIRRAAEQAIEALMNKEKEPAVRAADAIAILEEISEDPNMPLHTRTIIWEVLGALEQIK</sequence>
<gene>
    <name type="ordered locus">PYRAB16980</name>
    <name type="ORF">PAB1112</name>
</gene>
<comment type="similarity">
    <text evidence="1">Belongs to the UPF0147 family.</text>
</comment>
<comment type="sequence caution" evidence="1">
    <conflict type="erroneous initiation">
        <sequence resource="EMBL-CDS" id="CAB50602"/>
    </conflict>
    <text>Extended N-terminus.</text>
</comment>
<organism>
    <name type="scientific">Pyrococcus abyssi (strain GE5 / Orsay)</name>
    <dbReference type="NCBI Taxonomy" id="272844"/>
    <lineage>
        <taxon>Archaea</taxon>
        <taxon>Methanobacteriati</taxon>
        <taxon>Methanobacteriota</taxon>
        <taxon>Thermococci</taxon>
        <taxon>Thermococcales</taxon>
        <taxon>Thermococcaceae</taxon>
        <taxon>Pyrococcus</taxon>
    </lineage>
</organism>
<protein>
    <recommendedName>
        <fullName>UPF0147 protein PYRAB16980</fullName>
    </recommendedName>
</protein>
<reference key="1">
    <citation type="journal article" date="2003" name="Mol. Microbiol.">
        <title>An integrated analysis of the genome of the hyperthermophilic archaeon Pyrococcus abyssi.</title>
        <authorList>
            <person name="Cohen G.N."/>
            <person name="Barbe V."/>
            <person name="Flament D."/>
            <person name="Galperin M."/>
            <person name="Heilig R."/>
            <person name="Lecompte O."/>
            <person name="Poch O."/>
            <person name="Prieur D."/>
            <person name="Querellou J."/>
            <person name="Ripp R."/>
            <person name="Thierry J.-C."/>
            <person name="Van der Oost J."/>
            <person name="Weissenbach J."/>
            <person name="Zivanovic Y."/>
            <person name="Forterre P."/>
        </authorList>
    </citation>
    <scope>NUCLEOTIDE SEQUENCE [LARGE SCALE GENOMIC DNA]</scope>
    <source>
        <strain>GE5 / Orsay</strain>
    </source>
</reference>
<reference key="2">
    <citation type="journal article" date="2012" name="Curr. Microbiol.">
        <title>Re-annotation of two hyperthermophilic archaea Pyrococcus abyssi GE5 and Pyrococcus furiosus DSM 3638.</title>
        <authorList>
            <person name="Gao J."/>
            <person name="Wang J."/>
        </authorList>
    </citation>
    <scope>GENOME REANNOTATION</scope>
    <source>
        <strain>GE5 / Orsay</strain>
    </source>
</reference>
<evidence type="ECO:0000305" key="1"/>
<proteinExistence type="inferred from homology"/>
<feature type="chain" id="PRO_0000150912" description="UPF0147 protein PYRAB16980">
    <location>
        <begin position="1"/>
        <end position="86"/>
    </location>
</feature>